<feature type="chain" id="PRO_1000076753" description="Phosphopantetheine adenylyltransferase">
    <location>
        <begin position="1"/>
        <end position="164"/>
    </location>
</feature>
<feature type="binding site" evidence="1">
    <location>
        <begin position="9"/>
        <end position="10"/>
    </location>
    <ligand>
        <name>ATP</name>
        <dbReference type="ChEBI" id="CHEBI:30616"/>
    </ligand>
</feature>
<feature type="binding site" evidence="1">
    <location>
        <position position="9"/>
    </location>
    <ligand>
        <name>substrate</name>
    </ligand>
</feature>
<feature type="binding site" evidence="1">
    <location>
        <position position="17"/>
    </location>
    <ligand>
        <name>ATP</name>
        <dbReference type="ChEBI" id="CHEBI:30616"/>
    </ligand>
</feature>
<feature type="binding site" evidence="1">
    <location>
        <position position="41"/>
    </location>
    <ligand>
        <name>substrate</name>
    </ligand>
</feature>
<feature type="binding site" evidence="1">
    <location>
        <position position="78"/>
    </location>
    <ligand>
        <name>substrate</name>
    </ligand>
</feature>
<feature type="binding site" evidence="1">
    <location>
        <position position="92"/>
    </location>
    <ligand>
        <name>substrate</name>
    </ligand>
</feature>
<feature type="binding site" evidence="1">
    <location>
        <begin position="93"/>
        <end position="95"/>
    </location>
    <ligand>
        <name>ATP</name>
        <dbReference type="ChEBI" id="CHEBI:30616"/>
    </ligand>
</feature>
<feature type="binding site" evidence="1">
    <location>
        <position position="103"/>
    </location>
    <ligand>
        <name>ATP</name>
        <dbReference type="ChEBI" id="CHEBI:30616"/>
    </ligand>
</feature>
<feature type="binding site" evidence="1">
    <location>
        <begin position="128"/>
        <end position="134"/>
    </location>
    <ligand>
        <name>ATP</name>
        <dbReference type="ChEBI" id="CHEBI:30616"/>
    </ligand>
</feature>
<feature type="site" description="Transition state stabilizer" evidence="1">
    <location>
        <position position="17"/>
    </location>
</feature>
<reference key="1">
    <citation type="submission" date="2007-12" db="EMBL/GenBank/DDBJ databases">
        <title>Brucella suis ATCC 23445 whole genome shotgun sequencing project.</title>
        <authorList>
            <person name="Setubal J.C."/>
            <person name="Bowns C."/>
            <person name="Boyle S."/>
            <person name="Crasta O.R."/>
            <person name="Czar M.J."/>
            <person name="Dharmanolla C."/>
            <person name="Gillespie J.J."/>
            <person name="Kenyon R.W."/>
            <person name="Lu J."/>
            <person name="Mane S."/>
            <person name="Mohapatra S."/>
            <person name="Nagrani S."/>
            <person name="Purkayastha A."/>
            <person name="Rajasimha H.K."/>
            <person name="Shallom J.M."/>
            <person name="Shallom S."/>
            <person name="Shukla M."/>
            <person name="Snyder E.E."/>
            <person name="Sobral B.W."/>
            <person name="Wattam A.R."/>
            <person name="Will R."/>
            <person name="Williams K."/>
            <person name="Yoo H."/>
            <person name="Bruce D."/>
            <person name="Detter C."/>
            <person name="Munk C."/>
            <person name="Brettin T.S."/>
        </authorList>
    </citation>
    <scope>NUCLEOTIDE SEQUENCE [LARGE SCALE GENOMIC DNA]</scope>
    <source>
        <strain>ATCC 23445 / NCTC 10510</strain>
    </source>
</reference>
<proteinExistence type="inferred from homology"/>
<comment type="function">
    <text evidence="1">Reversibly transfers an adenylyl group from ATP to 4'-phosphopantetheine, yielding dephospho-CoA (dPCoA) and pyrophosphate.</text>
</comment>
<comment type="catalytic activity">
    <reaction evidence="1">
        <text>(R)-4'-phosphopantetheine + ATP + H(+) = 3'-dephospho-CoA + diphosphate</text>
        <dbReference type="Rhea" id="RHEA:19801"/>
        <dbReference type="ChEBI" id="CHEBI:15378"/>
        <dbReference type="ChEBI" id="CHEBI:30616"/>
        <dbReference type="ChEBI" id="CHEBI:33019"/>
        <dbReference type="ChEBI" id="CHEBI:57328"/>
        <dbReference type="ChEBI" id="CHEBI:61723"/>
        <dbReference type="EC" id="2.7.7.3"/>
    </reaction>
</comment>
<comment type="cofactor">
    <cofactor evidence="1">
        <name>Mg(2+)</name>
        <dbReference type="ChEBI" id="CHEBI:18420"/>
    </cofactor>
</comment>
<comment type="pathway">
    <text evidence="1">Cofactor biosynthesis; coenzyme A biosynthesis; CoA from (R)-pantothenate: step 4/5.</text>
</comment>
<comment type="subunit">
    <text evidence="1">Homohexamer.</text>
</comment>
<comment type="subcellular location">
    <subcellularLocation>
        <location evidence="1">Cytoplasm</location>
    </subcellularLocation>
</comment>
<comment type="similarity">
    <text evidence="1">Belongs to the bacterial CoaD family.</text>
</comment>
<dbReference type="EC" id="2.7.7.3" evidence="1"/>
<dbReference type="EMBL" id="CP000911">
    <property type="protein sequence ID" value="ABY38196.1"/>
    <property type="molecule type" value="Genomic_DNA"/>
</dbReference>
<dbReference type="RefSeq" id="WP_006070830.1">
    <property type="nucleotide sequence ID" value="NC_010169.1"/>
</dbReference>
<dbReference type="SMR" id="B0CGP5"/>
<dbReference type="KEGG" id="bmt:BSUIS_A1142"/>
<dbReference type="HOGENOM" id="CLU_100149_0_1_5"/>
<dbReference type="UniPathway" id="UPA00241">
    <property type="reaction ID" value="UER00355"/>
</dbReference>
<dbReference type="Proteomes" id="UP000008545">
    <property type="component" value="Chromosome I"/>
</dbReference>
<dbReference type="GO" id="GO:0005737">
    <property type="term" value="C:cytoplasm"/>
    <property type="evidence" value="ECO:0007669"/>
    <property type="project" value="UniProtKB-SubCell"/>
</dbReference>
<dbReference type="GO" id="GO:0005524">
    <property type="term" value="F:ATP binding"/>
    <property type="evidence" value="ECO:0007669"/>
    <property type="project" value="UniProtKB-KW"/>
</dbReference>
<dbReference type="GO" id="GO:0004595">
    <property type="term" value="F:pantetheine-phosphate adenylyltransferase activity"/>
    <property type="evidence" value="ECO:0007669"/>
    <property type="project" value="UniProtKB-UniRule"/>
</dbReference>
<dbReference type="GO" id="GO:0015937">
    <property type="term" value="P:coenzyme A biosynthetic process"/>
    <property type="evidence" value="ECO:0007669"/>
    <property type="project" value="UniProtKB-UniRule"/>
</dbReference>
<dbReference type="CDD" id="cd02163">
    <property type="entry name" value="PPAT"/>
    <property type="match status" value="1"/>
</dbReference>
<dbReference type="Gene3D" id="3.40.50.620">
    <property type="entry name" value="HUPs"/>
    <property type="match status" value="1"/>
</dbReference>
<dbReference type="HAMAP" id="MF_00151">
    <property type="entry name" value="PPAT_bact"/>
    <property type="match status" value="1"/>
</dbReference>
<dbReference type="InterPro" id="IPR004821">
    <property type="entry name" value="Cyt_trans-like"/>
</dbReference>
<dbReference type="InterPro" id="IPR001980">
    <property type="entry name" value="PPAT"/>
</dbReference>
<dbReference type="InterPro" id="IPR014729">
    <property type="entry name" value="Rossmann-like_a/b/a_fold"/>
</dbReference>
<dbReference type="NCBIfam" id="TIGR01510">
    <property type="entry name" value="coaD_prev_kdtB"/>
    <property type="match status" value="1"/>
</dbReference>
<dbReference type="NCBIfam" id="TIGR00125">
    <property type="entry name" value="cyt_tran_rel"/>
    <property type="match status" value="1"/>
</dbReference>
<dbReference type="PANTHER" id="PTHR21342">
    <property type="entry name" value="PHOSPHOPANTETHEINE ADENYLYLTRANSFERASE"/>
    <property type="match status" value="1"/>
</dbReference>
<dbReference type="PANTHER" id="PTHR21342:SF1">
    <property type="entry name" value="PHOSPHOPANTETHEINE ADENYLYLTRANSFERASE"/>
    <property type="match status" value="1"/>
</dbReference>
<dbReference type="Pfam" id="PF01467">
    <property type="entry name" value="CTP_transf_like"/>
    <property type="match status" value="1"/>
</dbReference>
<dbReference type="PRINTS" id="PR01020">
    <property type="entry name" value="LPSBIOSNTHSS"/>
</dbReference>
<dbReference type="SUPFAM" id="SSF52374">
    <property type="entry name" value="Nucleotidylyl transferase"/>
    <property type="match status" value="1"/>
</dbReference>
<gene>
    <name evidence="1" type="primary">coaD</name>
    <name type="ordered locus">BSUIS_A1142</name>
</gene>
<organism>
    <name type="scientific">Brucella suis (strain ATCC 23445 / NCTC 10510)</name>
    <dbReference type="NCBI Taxonomy" id="470137"/>
    <lineage>
        <taxon>Bacteria</taxon>
        <taxon>Pseudomonadati</taxon>
        <taxon>Pseudomonadota</taxon>
        <taxon>Alphaproteobacteria</taxon>
        <taxon>Hyphomicrobiales</taxon>
        <taxon>Brucellaceae</taxon>
        <taxon>Brucella/Ochrobactrum group</taxon>
        <taxon>Brucella</taxon>
    </lineage>
</organism>
<evidence type="ECO:0000255" key="1">
    <source>
        <dbReference type="HAMAP-Rule" id="MF_00151"/>
    </source>
</evidence>
<keyword id="KW-0067">ATP-binding</keyword>
<keyword id="KW-0173">Coenzyme A biosynthesis</keyword>
<keyword id="KW-0963">Cytoplasm</keyword>
<keyword id="KW-0460">Magnesium</keyword>
<keyword id="KW-0547">Nucleotide-binding</keyword>
<keyword id="KW-0548">Nucleotidyltransferase</keyword>
<keyword id="KW-0808">Transferase</keyword>
<sequence length="164" mass="17425">MTIAIYAGSFDPVTNGHIDVLKGALRLADQVIVAIGMHPGKKPLFSFDERVALIEASAKAVLHKDAARVSVIAFDGLVIDAARKHGAQLMVRGLRDGTDLDYEMQMAGMNGTMAPELQTVFLPADPAVRTITATLVRQIASMGGDIKPFVPVPVAAALNTKFKS</sequence>
<protein>
    <recommendedName>
        <fullName evidence="1">Phosphopantetheine adenylyltransferase</fullName>
        <ecNumber evidence="1">2.7.7.3</ecNumber>
    </recommendedName>
    <alternativeName>
        <fullName evidence="1">Dephospho-CoA pyrophosphorylase</fullName>
    </alternativeName>
    <alternativeName>
        <fullName evidence="1">Pantetheine-phosphate adenylyltransferase</fullName>
        <shortName evidence="1">PPAT</shortName>
    </alternativeName>
</protein>
<accession>B0CGP5</accession>
<name>COAD_BRUSI</name>